<keyword id="KW-0349">Heme</keyword>
<keyword id="KW-0408">Iron</keyword>
<keyword id="KW-0472">Membrane</keyword>
<keyword id="KW-0479">Metal-binding</keyword>
<keyword id="KW-0503">Monooxygenase</keyword>
<keyword id="KW-0560">Oxidoreductase</keyword>
<keyword id="KW-0812">Transmembrane</keyword>
<keyword id="KW-1133">Transmembrane helix</keyword>
<keyword id="KW-0843">Virulence</keyword>
<reference key="1">
    <citation type="journal article" date="2012" name="PLoS Genet.">
        <title>Comparative analysis of the genomes of two field isolates of the rice blast fungus Magnaporthe oryzae.</title>
        <authorList>
            <person name="Xue M."/>
            <person name="Yang J."/>
            <person name="Li Z."/>
            <person name="Hu S."/>
            <person name="Yao N."/>
            <person name="Dean R.A."/>
            <person name="Zhao W."/>
            <person name="Shen M."/>
            <person name="Zhang H."/>
            <person name="Li C."/>
            <person name="Liu L."/>
            <person name="Cao L."/>
            <person name="Xu X."/>
            <person name="Xing Y."/>
            <person name="Hsiang T."/>
            <person name="Zhang Z."/>
            <person name="Xu J.-R."/>
            <person name="Peng Y.-L."/>
        </authorList>
    </citation>
    <scope>NUCLEOTIDE SEQUENCE [LARGE SCALE GENOMIC DNA]</scope>
    <source>
        <strain>Y34</strain>
    </source>
</reference>
<reference key="2">
    <citation type="journal article" date="2015" name="Front. Plant Sci.">
        <title>Crucial roles of abscisic acid biogenesis in virulence of rice blast fungus Magnaporthe oryzae.</title>
        <authorList>
            <person name="Spence C.A."/>
            <person name="Lakshmanan V."/>
            <person name="Donofrio N."/>
            <person name="Bais H.P."/>
        </authorList>
    </citation>
    <scope>IDENTIFICATION</scope>
    <scope>INDUCTION</scope>
    <scope>FUNCTION</scope>
    <scope>PATHWAY</scope>
</reference>
<reference key="3">
    <citation type="journal article" date="2017" name="Front. Plant Sci.">
        <title>Abscisic acid as pathogen effector and immune regulator.</title>
        <authorList>
            <person name="Lievens L."/>
            <person name="Pollier J."/>
            <person name="Goossens A."/>
            <person name="Beyaert R."/>
            <person name="Staal J."/>
        </authorList>
    </citation>
    <scope>FUNCTION</scope>
</reference>
<accession>L7HYA8</accession>
<gene>
    <name type="ORF">OOU_Y34scaffold00719g26</name>
</gene>
<feature type="chain" id="PRO_0000448413" description="Cytochrome P450 monooxygenase ABA1">
    <location>
        <begin position="1"/>
        <end position="512"/>
    </location>
</feature>
<feature type="transmembrane region" description="Helical" evidence="3">
    <location>
        <begin position="13"/>
        <end position="32"/>
    </location>
</feature>
<feature type="binding site" description="axial binding residue" evidence="1">
    <location>
        <position position="458"/>
    </location>
    <ligand>
        <name>heme</name>
        <dbReference type="ChEBI" id="CHEBI:30413"/>
    </ligand>
    <ligandPart>
        <name>Fe</name>
        <dbReference type="ChEBI" id="CHEBI:18248"/>
    </ligandPart>
</feature>
<comment type="function">
    <text evidence="2 4">Cytochrome P450 monooxygenase involved in the biosynthesis of abscisic acid (ABA), a phytohormone that acts antagonistically toward salicylic acid (SA), jasmonic acid (JA) and ethylene (ETH) signaling, to impede plant defense responses (PubMed:26648962). During pathogen-host interaction, ABA plays a dual role in disease severity by increasing plant susceptibility and accelerating pathogenesis in the fungus itself (PubMed:26648962). The first step of the pathway catalyzes the reaction from farnesyl diphosphate to alpha-ionylideneethane performed by the alpha-ionylideneethane synthase ABA3 via a three-step reaction mechanism involving 2 neutral intermediates, beta-farnesene and allofarnesene (By similarity). The cytochrome P450 monooxygenase ABA1 might then be involved in the conversion of alpha-ionylideneethane to alpha-ionylideneacetic acid (By similarity). Alpha-ionylideneacetic acid is further converted to abscisic acid in 2 steps involving the cytochrome P450 monooxygenase ABA2 and the short-chain dehydrogenase/reductase ABA4, via the intermediates 1'-deoxy-ABA or 1',4'-trans-diol-ABA, depending on the order of action of these 2 enzymes (By similarity). ABA2 is responsible for the hydroxylation of carbon atom C-1' and ABA4 might be involved in the oxidation of the C-4' carbon atom (By similarity).</text>
</comment>
<comment type="cofactor">
    <cofactor evidence="1">
        <name>heme</name>
        <dbReference type="ChEBI" id="CHEBI:30413"/>
    </cofactor>
</comment>
<comment type="pathway">
    <text evidence="4">Hormone biosynthesis.</text>
</comment>
<comment type="subcellular location">
    <subcellularLocation>
        <location evidence="3">Membrane</location>
        <topology evidence="3">Single-pass membrane protein</topology>
    </subcellularLocation>
</comment>
<comment type="similarity">
    <text evidence="6">Belongs to the cytochrome P450 family.</text>
</comment>
<sequence>MMLQQVADALATHWLSGILAIATVYLATSYIIDYRRLRAFPGPPLGSFSYLWLAYNALQGRQGSIFYEVMKRYRVPEHSFVRIGPNDLMTDSPEVVRHMSSARSTYLRSSWYRTSKLDPSGDSLLSIMDTAHHDALKAKAGRGYAGRDNRNLESDIDDQLRRLIGLLERKYLSGGGDASSFRPVDMATTMQYFTLDSITKLAYSSAFGFLDLDTDVYGYIKAIRDAAPPIIVCSEWPLAGRIFFSPPFLKMFGPTPKDKSGVGKLMGTLRQVVASRFGPDAKDQPDMLGSFVRNGLSQHQCEQEVILQIVAGSDTTATALRGTLLQLCSTPMVYLKLQKEIDEAVRSGMVGEGVISQETARKLPYLQAVIYEGLRLNPPFTGALMKEVPPGGDEIDGVFIPAGVRIGVSAKGIQMRQDVYGHDVDVFRPERWTECDEQRRMRMAANTELVFGYGRWMCAGKNVAFMELNKVYFELLRRFDFQVVDTKTPVKEESFNVMFSKDMFMKVTKRVL</sequence>
<name>ABA1_PYRO3</name>
<protein>
    <recommendedName>
        <fullName evidence="5">Cytochrome P450 monooxygenase ABA1</fullName>
        <ecNumber evidence="7">1.-.-.-</ecNumber>
    </recommendedName>
    <alternativeName>
        <fullName evidence="5">Abscisic acid biosynthesis protein 1</fullName>
    </alternativeName>
</protein>
<dbReference type="EC" id="1.-.-.-" evidence="7"/>
<dbReference type="EMBL" id="JH793878">
    <property type="protein sequence ID" value="ELQ35262.1"/>
    <property type="molecule type" value="Genomic_DNA"/>
</dbReference>
<dbReference type="SMR" id="L7HYA8"/>
<dbReference type="OrthoDB" id="626499at147550"/>
<dbReference type="Proteomes" id="UP000011086">
    <property type="component" value="Unassembled WGS sequence"/>
</dbReference>
<dbReference type="GO" id="GO:0016020">
    <property type="term" value="C:membrane"/>
    <property type="evidence" value="ECO:0007669"/>
    <property type="project" value="UniProtKB-SubCell"/>
</dbReference>
<dbReference type="GO" id="GO:0020037">
    <property type="term" value="F:heme binding"/>
    <property type="evidence" value="ECO:0007669"/>
    <property type="project" value="InterPro"/>
</dbReference>
<dbReference type="GO" id="GO:0005506">
    <property type="term" value="F:iron ion binding"/>
    <property type="evidence" value="ECO:0007669"/>
    <property type="project" value="InterPro"/>
</dbReference>
<dbReference type="GO" id="GO:0004497">
    <property type="term" value="F:monooxygenase activity"/>
    <property type="evidence" value="ECO:0007669"/>
    <property type="project" value="UniProtKB-KW"/>
</dbReference>
<dbReference type="GO" id="GO:0016705">
    <property type="term" value="F:oxidoreductase activity, acting on paired donors, with incorporation or reduction of molecular oxygen"/>
    <property type="evidence" value="ECO:0007669"/>
    <property type="project" value="InterPro"/>
</dbReference>
<dbReference type="GO" id="GO:0009688">
    <property type="term" value="P:abscisic acid biosynthetic process"/>
    <property type="evidence" value="ECO:0000250"/>
    <property type="project" value="GO_Central"/>
</dbReference>
<dbReference type="CDD" id="cd11060">
    <property type="entry name" value="CYP57A1-like"/>
    <property type="match status" value="1"/>
</dbReference>
<dbReference type="FunFam" id="1.10.630.10:FF:000076">
    <property type="entry name" value="Cytochrome P450 monooxygenase"/>
    <property type="match status" value="1"/>
</dbReference>
<dbReference type="Gene3D" id="1.10.630.10">
    <property type="entry name" value="Cytochrome P450"/>
    <property type="match status" value="1"/>
</dbReference>
<dbReference type="InterPro" id="IPR001128">
    <property type="entry name" value="Cyt_P450"/>
</dbReference>
<dbReference type="InterPro" id="IPR002403">
    <property type="entry name" value="Cyt_P450_E_grp-IV"/>
</dbReference>
<dbReference type="InterPro" id="IPR036396">
    <property type="entry name" value="Cyt_P450_sf"/>
</dbReference>
<dbReference type="InterPro" id="IPR050121">
    <property type="entry name" value="Cytochrome_P450_monoxygenase"/>
</dbReference>
<dbReference type="PANTHER" id="PTHR24305">
    <property type="entry name" value="CYTOCHROME P450"/>
    <property type="match status" value="1"/>
</dbReference>
<dbReference type="PANTHER" id="PTHR24305:SF77">
    <property type="entry name" value="CYTOCHROME P450 MONOOXYGENASE"/>
    <property type="match status" value="1"/>
</dbReference>
<dbReference type="Pfam" id="PF00067">
    <property type="entry name" value="p450"/>
    <property type="match status" value="1"/>
</dbReference>
<dbReference type="PRINTS" id="PR00465">
    <property type="entry name" value="EP450IV"/>
</dbReference>
<dbReference type="PRINTS" id="PR00385">
    <property type="entry name" value="P450"/>
</dbReference>
<dbReference type="SUPFAM" id="SSF48264">
    <property type="entry name" value="Cytochrome P450"/>
    <property type="match status" value="1"/>
</dbReference>
<organism>
    <name type="scientific">Pyricularia oryzae (strain Y34)</name>
    <name type="common">Rice blast fungus</name>
    <name type="synonym">Magnaporthe oryzae</name>
    <dbReference type="NCBI Taxonomy" id="1143189"/>
    <lineage>
        <taxon>Eukaryota</taxon>
        <taxon>Fungi</taxon>
        <taxon>Dikarya</taxon>
        <taxon>Ascomycota</taxon>
        <taxon>Pezizomycotina</taxon>
        <taxon>Sordariomycetes</taxon>
        <taxon>Sordariomycetidae</taxon>
        <taxon>Magnaporthales</taxon>
        <taxon>Pyriculariaceae</taxon>
        <taxon>Pyricularia</taxon>
    </lineage>
</organism>
<proteinExistence type="evidence at transcript level"/>
<evidence type="ECO:0000250" key="1">
    <source>
        <dbReference type="UniProtKB" id="P04798"/>
    </source>
</evidence>
<evidence type="ECO:0000250" key="2">
    <source>
        <dbReference type="UniProtKB" id="Q6H9H9"/>
    </source>
</evidence>
<evidence type="ECO:0000255" key="3"/>
<evidence type="ECO:0000269" key="4">
    <source>
    </source>
</evidence>
<evidence type="ECO:0000303" key="5">
    <source>
    </source>
</evidence>
<evidence type="ECO:0000305" key="6"/>
<evidence type="ECO:0000305" key="7">
    <source>
    </source>
</evidence>